<gene>
    <name evidence="1" type="primary">pcn</name>
    <name type="ordered locus">Mboo_1392</name>
</gene>
<feature type="chain" id="PRO_1000132967" description="DNA polymerase sliding clamp">
    <location>
        <begin position="1"/>
        <end position="247"/>
    </location>
</feature>
<proteinExistence type="inferred from homology"/>
<organism>
    <name type="scientific">Methanoregula boonei (strain DSM 21154 / JCM 14090 / 6A8)</name>
    <dbReference type="NCBI Taxonomy" id="456442"/>
    <lineage>
        <taxon>Archaea</taxon>
        <taxon>Methanobacteriati</taxon>
        <taxon>Methanobacteriota</taxon>
        <taxon>Stenosarchaea group</taxon>
        <taxon>Methanomicrobia</taxon>
        <taxon>Methanomicrobiales</taxon>
        <taxon>Methanoregulaceae</taxon>
        <taxon>Methanoregula</taxon>
    </lineage>
</organism>
<sequence length="247" mass="26951">MLKATIDAEIFREAIEAISALVPECRLHTAEDGITTRAVDTANVAMIAFTLKKEAFDTFKATKSEIGVDISKMKNIFNMGGKGDLISLELADNAQKMAVSVHGYHYSITLLDTNTIRKDPNSPTINLPGKVVISGEDLNNAIKAAAVISDKIAMGINPKDQTFYMVAEGDTDHIQREFGKDELKSLSPVEARSLFSLDYLRDMGKVMSKATEVEVCLGIDHPVRFSFDIAGGNGHVEYLLAPRIEAD</sequence>
<dbReference type="EMBL" id="CP000780">
    <property type="protein sequence ID" value="ABS55910.1"/>
    <property type="molecule type" value="Genomic_DNA"/>
</dbReference>
<dbReference type="RefSeq" id="WP_012106943.1">
    <property type="nucleotide sequence ID" value="NC_009712.1"/>
</dbReference>
<dbReference type="SMR" id="A7I849"/>
<dbReference type="STRING" id="456442.Mboo_1392"/>
<dbReference type="GeneID" id="5410954"/>
<dbReference type="KEGG" id="mbn:Mboo_1392"/>
<dbReference type="eggNOG" id="arCOG00488">
    <property type="taxonomic scope" value="Archaea"/>
</dbReference>
<dbReference type="HOGENOM" id="CLU_043978_1_1_2"/>
<dbReference type="OrthoDB" id="14749at2157"/>
<dbReference type="Proteomes" id="UP000002408">
    <property type="component" value="Chromosome"/>
</dbReference>
<dbReference type="GO" id="GO:0003677">
    <property type="term" value="F:DNA binding"/>
    <property type="evidence" value="ECO:0007669"/>
    <property type="project" value="UniProtKB-UniRule"/>
</dbReference>
<dbReference type="GO" id="GO:0030337">
    <property type="term" value="F:DNA polymerase processivity factor activity"/>
    <property type="evidence" value="ECO:0007669"/>
    <property type="project" value="UniProtKB-UniRule"/>
</dbReference>
<dbReference type="GO" id="GO:0006272">
    <property type="term" value="P:leading strand elongation"/>
    <property type="evidence" value="ECO:0007669"/>
    <property type="project" value="TreeGrafter"/>
</dbReference>
<dbReference type="GO" id="GO:0006275">
    <property type="term" value="P:regulation of DNA replication"/>
    <property type="evidence" value="ECO:0007669"/>
    <property type="project" value="UniProtKB-UniRule"/>
</dbReference>
<dbReference type="CDD" id="cd00577">
    <property type="entry name" value="PCNA"/>
    <property type="match status" value="1"/>
</dbReference>
<dbReference type="Gene3D" id="3.70.10.10">
    <property type="match status" value="1"/>
</dbReference>
<dbReference type="HAMAP" id="MF_00317">
    <property type="entry name" value="DNApol_clamp_arch"/>
    <property type="match status" value="1"/>
</dbReference>
<dbReference type="InterPro" id="IPR046938">
    <property type="entry name" value="DNA_clamp_sf"/>
</dbReference>
<dbReference type="InterPro" id="IPR000730">
    <property type="entry name" value="Pr_cel_nuc_antig"/>
</dbReference>
<dbReference type="InterPro" id="IPR022648">
    <property type="entry name" value="Pr_cel_nuc_antig_N"/>
</dbReference>
<dbReference type="NCBIfam" id="NF002222">
    <property type="entry name" value="PRK01115.1-5"/>
    <property type="match status" value="1"/>
</dbReference>
<dbReference type="PANTHER" id="PTHR11352">
    <property type="entry name" value="PROLIFERATING CELL NUCLEAR ANTIGEN"/>
    <property type="match status" value="1"/>
</dbReference>
<dbReference type="PANTHER" id="PTHR11352:SF0">
    <property type="entry name" value="PROLIFERATING CELL NUCLEAR ANTIGEN"/>
    <property type="match status" value="1"/>
</dbReference>
<dbReference type="Pfam" id="PF00705">
    <property type="entry name" value="PCNA_N"/>
    <property type="match status" value="1"/>
</dbReference>
<dbReference type="PRINTS" id="PR00339">
    <property type="entry name" value="PCNACYCLIN"/>
</dbReference>
<dbReference type="SUPFAM" id="SSF55979">
    <property type="entry name" value="DNA clamp"/>
    <property type="match status" value="2"/>
</dbReference>
<evidence type="ECO:0000255" key="1">
    <source>
        <dbReference type="HAMAP-Rule" id="MF_00317"/>
    </source>
</evidence>
<keyword id="KW-0235">DNA replication</keyword>
<keyword id="KW-0238">DNA-binding</keyword>
<keyword id="KW-1185">Reference proteome</keyword>
<name>PCNA_METB6</name>
<comment type="function">
    <text evidence="1">Sliding clamp subunit that acts as a moving platform for DNA processing. Responsible for tethering the catalytic subunit of DNA polymerase and other proteins to DNA during high-speed replication.</text>
</comment>
<comment type="subunit">
    <text evidence="1">Homotrimer. The subunits circularize to form a toroid; DNA passes through its center. Replication factor C (RFC) is required to load the toroid on the DNA.</text>
</comment>
<comment type="similarity">
    <text evidence="1">Belongs to the PCNA family.</text>
</comment>
<reference key="1">
    <citation type="journal article" date="2015" name="Microbiology">
        <title>Genome of Methanoregula boonei 6A8 reveals adaptations to oligotrophic peatland environments.</title>
        <authorList>
            <person name="Braeuer S."/>
            <person name="Cadillo-Quiroz H."/>
            <person name="Kyrpides N."/>
            <person name="Woyke T."/>
            <person name="Goodwin L."/>
            <person name="Detter C."/>
            <person name="Podell S."/>
            <person name="Yavitt J.B."/>
            <person name="Zinder S.H."/>
        </authorList>
    </citation>
    <scope>NUCLEOTIDE SEQUENCE [LARGE SCALE GENOMIC DNA]</scope>
    <source>
        <strain>DSM 21154 / JCM 14090 / 6A8</strain>
    </source>
</reference>
<protein>
    <recommendedName>
        <fullName evidence="1">DNA polymerase sliding clamp</fullName>
    </recommendedName>
    <alternativeName>
        <fullName evidence="1">Proliferating cell nuclear antigen homolog</fullName>
        <shortName evidence="1">PCNA</shortName>
    </alternativeName>
</protein>
<accession>A7I849</accession>